<name>SL1_BOTDP</name>
<proteinExistence type="evidence at protein level"/>
<comment type="function">
    <text evidence="4">Interferes with one step of hemostasis (modulation of platelet aggregation, or coagulation cascade, for example).</text>
</comment>
<comment type="subunit">
    <text evidence="2">Dimer; disulfide-linked.</text>
</comment>
<comment type="subcellular location">
    <subcellularLocation>
        <location evidence="2">Secreted</location>
    </subcellularLocation>
</comment>
<comment type="tissue specificity">
    <text evidence="5">Expressed by the venom gland.</text>
</comment>
<comment type="mass spectrometry"/>
<comment type="similarity">
    <text evidence="1">Belongs to the snaclec family.</text>
</comment>
<evidence type="ECO:0000255" key="1"/>
<evidence type="ECO:0000269" key="2">
    <source ref="1"/>
</evidence>
<evidence type="ECO:0000303" key="3">
    <source ref="1"/>
</evidence>
<evidence type="ECO:0000305" key="4"/>
<evidence type="ECO:0000305" key="5">
    <source ref="1"/>
</evidence>
<protein>
    <recommendedName>
        <fullName evidence="3">Snaclec</fullName>
    </recommendedName>
</protein>
<keyword id="KW-0903">Direct protein sequencing</keyword>
<keyword id="KW-1015">Disulfide bond</keyword>
<keyword id="KW-1199">Hemostasis impairing toxin</keyword>
<keyword id="KW-1201">Platelet aggregation inhibiting toxin</keyword>
<keyword id="KW-0964">Secreted</keyword>
<keyword id="KW-0800">Toxin</keyword>
<feature type="chain" id="PRO_0000431696" description="Snaclec" evidence="2">
    <location>
        <begin position="1"/>
        <end position="32" status="greater than"/>
    </location>
</feature>
<feature type="non-consecutive residues" evidence="3">
    <location>
        <begin position="8"/>
        <end position="9"/>
    </location>
</feature>
<feature type="non-consecutive residues" evidence="3">
    <location>
        <begin position="18"/>
        <end position="19"/>
    </location>
</feature>
<feature type="non-terminal residue" evidence="3">
    <location>
        <position position="1"/>
    </location>
</feature>
<feature type="non-terminal residue" evidence="3">
    <location>
        <position position="32"/>
    </location>
</feature>
<reference evidence="4" key="1">
    <citation type="submission" date="2014-10" db="UniProtKB">
        <title>A constant area monolayer method to assess optimal lipid packing for lipolysis tested with secreted phospholipases A2.</title>
        <authorList>
            <person name="Yunes P.J."/>
            <person name="Madel N.P."/>
            <person name="Anal A.L."/>
            <person name="Rosario D."/>
            <person name="Fidelio G.D."/>
        </authorList>
    </citation>
    <scope>PROTEIN SEQUENCE</scope>
    <scope>SUBUNIT</scope>
    <scope>SUBCELLULAR LOCATION</scope>
    <scope>MASS SPECTROMETRY</scope>
    <source>
        <tissue evidence="3">Venom</tissue>
    </source>
</reference>
<sequence>YYVWIGLRWVNIDCVEGNWSDYSSVSYENLVR</sequence>
<organism>
    <name type="scientific">Bothrops diporus</name>
    <name type="common">Chaco lancehead</name>
    <name type="synonym">Bothrops neuwiedi diporus</name>
    <dbReference type="NCBI Taxonomy" id="1107943"/>
    <lineage>
        <taxon>Eukaryota</taxon>
        <taxon>Metazoa</taxon>
        <taxon>Chordata</taxon>
        <taxon>Craniata</taxon>
        <taxon>Vertebrata</taxon>
        <taxon>Euteleostomi</taxon>
        <taxon>Lepidosauria</taxon>
        <taxon>Squamata</taxon>
        <taxon>Bifurcata</taxon>
        <taxon>Unidentata</taxon>
        <taxon>Episquamata</taxon>
        <taxon>Toxicofera</taxon>
        <taxon>Serpentes</taxon>
        <taxon>Colubroidea</taxon>
        <taxon>Viperidae</taxon>
        <taxon>Crotalinae</taxon>
        <taxon>Bothrops</taxon>
    </lineage>
</organism>
<dbReference type="GO" id="GO:0005576">
    <property type="term" value="C:extracellular region"/>
    <property type="evidence" value="ECO:0007669"/>
    <property type="project" value="UniProtKB-SubCell"/>
</dbReference>
<dbReference type="GO" id="GO:0090729">
    <property type="term" value="F:toxin activity"/>
    <property type="evidence" value="ECO:0007669"/>
    <property type="project" value="UniProtKB-KW"/>
</dbReference>
<accession>C0HJQ0</accession>